<evidence type="ECO:0000250" key="1"/>
<evidence type="ECO:0000256" key="2">
    <source>
        <dbReference type="SAM" id="MobiDB-lite"/>
    </source>
</evidence>
<evidence type="ECO:0000305" key="3"/>
<keyword id="KW-0539">Nucleus</keyword>
<keyword id="KW-1185">Reference proteome</keyword>
<comment type="subcellular location">
    <subcellularLocation>
        <location evidence="1">Nucleus</location>
        <location evidence="1">Nucleolus</location>
    </subcellularLocation>
</comment>
<comment type="similarity">
    <text evidence="3">Belongs to the AATF family.</text>
</comment>
<proteinExistence type="inferred from homology"/>
<feature type="chain" id="PRO_0000056621" description="Protein BFR2">
    <location>
        <begin position="1"/>
        <end position="528"/>
    </location>
</feature>
<feature type="region of interest" description="Disordered" evidence="2">
    <location>
        <begin position="14"/>
        <end position="158"/>
    </location>
</feature>
<feature type="region of interest" description="Disordered" evidence="2">
    <location>
        <begin position="372"/>
        <end position="401"/>
    </location>
</feature>
<feature type="compositionally biased region" description="Acidic residues" evidence="2">
    <location>
        <begin position="132"/>
        <end position="146"/>
    </location>
</feature>
<organism>
    <name type="scientific">Eremothecium gossypii (strain ATCC 10895 / CBS 109.51 / FGSC 9923 / NRRL Y-1056)</name>
    <name type="common">Yeast</name>
    <name type="synonym">Ashbya gossypii</name>
    <dbReference type="NCBI Taxonomy" id="284811"/>
    <lineage>
        <taxon>Eukaryota</taxon>
        <taxon>Fungi</taxon>
        <taxon>Dikarya</taxon>
        <taxon>Ascomycota</taxon>
        <taxon>Saccharomycotina</taxon>
        <taxon>Saccharomycetes</taxon>
        <taxon>Saccharomycetales</taxon>
        <taxon>Saccharomycetaceae</taxon>
        <taxon>Eremothecium</taxon>
    </lineage>
</organism>
<sequence length="528" mass="58364">MGKTLADQITELANKSKVPDFDIEDEQVFEHDSNASGSEASDEDEALQAAHYVQVGRSKLRNKHNVLVEDSKYSGSKGSREALFNSSGEEDGSESDRRGSDSDGGSDSDSDAPEATLSSEQSADESARSDSDSGDSDSDSGSDAGEENSAVAEDADAKRERLSQLVRLETQQAMGKLNAAVQNDALKGYAIMEQSRFFEGAIDVRIKLQKAIAAANQLPLTKQSWESRLDAQDAELLESTCKLLHKVAGKCAELRTTFQNKERINQTEIDYQPSKKRSIDALAEQCHDLDSQLRDYRGAVLHMWSSKVAATSGKTALSSSKFKAINQPANVQVDNQLADMPRLVKRTQLNRRGVVPLGFEEDYKQKRLPLLDSNSAQDGGQEEDADVPANYDPRKKDNNAIDASENPYIFDDEDFYRVLLNDLVDKKILNAQQGSNVQVAIKARSQNKLKKNVDTKASKGRKLNYSVQEPIANYEAPINGGFKWSDEQIDEFFAGLLGQRVNFDERETSEAKDNEEEAIEHDDLRIFG</sequence>
<gene>
    <name type="primary">BFR2</name>
    <name type="ordered locus">AAL064W</name>
</gene>
<dbReference type="EMBL" id="AE016814">
    <property type="protein sequence ID" value="AAS50302.1"/>
    <property type="molecule type" value="Genomic_DNA"/>
</dbReference>
<dbReference type="RefSeq" id="NP_982478.1">
    <property type="nucleotide sequence ID" value="NM_207831.1"/>
</dbReference>
<dbReference type="SMR" id="Q75EZ2"/>
<dbReference type="FunCoup" id="Q75EZ2">
    <property type="interactions" value="995"/>
</dbReference>
<dbReference type="STRING" id="284811.Q75EZ2"/>
<dbReference type="EnsemblFungi" id="AAS50302">
    <property type="protein sequence ID" value="AAS50302"/>
    <property type="gene ID" value="AGOS_AAL064W"/>
</dbReference>
<dbReference type="GeneID" id="4618523"/>
<dbReference type="KEGG" id="ago:AGOS_AAL064W"/>
<dbReference type="eggNOG" id="KOG2773">
    <property type="taxonomic scope" value="Eukaryota"/>
</dbReference>
<dbReference type="HOGENOM" id="CLU_018299_2_2_1"/>
<dbReference type="InParanoid" id="Q75EZ2"/>
<dbReference type="OMA" id="INFMAPN"/>
<dbReference type="OrthoDB" id="5783963at2759"/>
<dbReference type="Proteomes" id="UP000000591">
    <property type="component" value="Chromosome I"/>
</dbReference>
<dbReference type="GO" id="GO:0005730">
    <property type="term" value="C:nucleolus"/>
    <property type="evidence" value="ECO:0000318"/>
    <property type="project" value="GO_Central"/>
</dbReference>
<dbReference type="GO" id="GO:0032040">
    <property type="term" value="C:small-subunit processome"/>
    <property type="evidence" value="ECO:0007669"/>
    <property type="project" value="EnsemblFungi"/>
</dbReference>
<dbReference type="GO" id="GO:0000462">
    <property type="term" value="P:maturation of SSU-rRNA from tricistronic rRNA transcript (SSU-rRNA, 5.8S rRNA, LSU-rRNA)"/>
    <property type="evidence" value="ECO:0000318"/>
    <property type="project" value="GO_Central"/>
</dbReference>
<dbReference type="InterPro" id="IPR025160">
    <property type="entry name" value="AATF"/>
</dbReference>
<dbReference type="InterPro" id="IPR039223">
    <property type="entry name" value="AATF/Bfr2"/>
</dbReference>
<dbReference type="InterPro" id="IPR012617">
    <property type="entry name" value="AATF_C"/>
</dbReference>
<dbReference type="PANTHER" id="PTHR15565">
    <property type="entry name" value="AATF PROTEIN APOPTOSIS ANTAGONIZING TRANSCRIPTION FACTOR"/>
    <property type="match status" value="1"/>
</dbReference>
<dbReference type="PANTHER" id="PTHR15565:SF0">
    <property type="entry name" value="PROTEIN AATF"/>
    <property type="match status" value="1"/>
</dbReference>
<dbReference type="Pfam" id="PF13339">
    <property type="entry name" value="AATF-Che1"/>
    <property type="match status" value="1"/>
</dbReference>
<dbReference type="Pfam" id="PF08164">
    <property type="entry name" value="TRAUB"/>
    <property type="match status" value="1"/>
</dbReference>
<protein>
    <recommendedName>
        <fullName>Protein BFR2</fullName>
    </recommendedName>
</protein>
<name>BFR2_EREGS</name>
<accession>Q75EZ2</accession>
<reference key="1">
    <citation type="journal article" date="2004" name="Science">
        <title>The Ashbya gossypii genome as a tool for mapping the ancient Saccharomyces cerevisiae genome.</title>
        <authorList>
            <person name="Dietrich F.S."/>
            <person name="Voegeli S."/>
            <person name="Brachat S."/>
            <person name="Lerch A."/>
            <person name="Gates K."/>
            <person name="Steiner S."/>
            <person name="Mohr C."/>
            <person name="Poehlmann R."/>
            <person name="Luedi P."/>
            <person name="Choi S."/>
            <person name="Wing R.A."/>
            <person name="Flavier A."/>
            <person name="Gaffney T.D."/>
            <person name="Philippsen P."/>
        </authorList>
    </citation>
    <scope>NUCLEOTIDE SEQUENCE [LARGE SCALE GENOMIC DNA]</scope>
    <source>
        <strain>ATCC 10895 / CBS 109.51 / FGSC 9923 / NRRL Y-1056</strain>
    </source>
</reference>
<reference key="2">
    <citation type="journal article" date="2013" name="G3 (Bethesda)">
        <title>Genomes of Ashbya fungi isolated from insects reveal four mating-type loci, numerous translocations, lack of transposons, and distinct gene duplications.</title>
        <authorList>
            <person name="Dietrich F.S."/>
            <person name="Voegeli S."/>
            <person name="Kuo S."/>
            <person name="Philippsen P."/>
        </authorList>
    </citation>
    <scope>GENOME REANNOTATION</scope>
    <source>
        <strain>ATCC 10895 / CBS 109.51 / FGSC 9923 / NRRL Y-1056</strain>
    </source>
</reference>